<accession>P0ADI2</accession>
<accession>P03011</accession>
<evidence type="ECO:0000255" key="1"/>
<evidence type="ECO:0000255" key="2">
    <source>
        <dbReference type="PROSITE-ProRule" id="PRU01072"/>
    </source>
</evidence>
<evidence type="ECO:0000305" key="3"/>
<evidence type="ECO:0007829" key="4">
    <source>
        <dbReference type="PDB" id="5CY1"/>
    </source>
</evidence>
<sequence>MRIFGYARVSTSQQSLDIQIRALKDAGVKANRIFTDKASGSSTDREGLDLLRMKVEEGDVILVKKLDRLGRDTADMIQLIKEFDAQGVAVRFIDDGISTDGDMGQMVVTILSAVAQAERRRILERTNEGRQEAKLKGIKFGRRRTVDRNVVLTLHQKGTGATEIAHQLSIARSTVYKILEDERAS</sequence>
<gene>
    <name type="primary">tnpR</name>
</gene>
<name>TNR3_ECOLX</name>
<keyword id="KW-0002">3D-structure</keyword>
<keyword id="KW-0229">DNA integration</keyword>
<keyword id="KW-0233">DNA recombination</keyword>
<keyword id="KW-0238">DNA-binding</keyword>
<keyword id="KW-0814">Transposable element</keyword>
<reference key="1">
    <citation type="journal article" date="1979" name="Cell">
        <title>DNA sequence analysis of the transposon Tn3: three genes and three sites involved in transposition of Tn3.</title>
        <authorList>
            <person name="Heffron F."/>
            <person name="McCarthy B.J."/>
            <person name="Ohtsubo H."/>
            <person name="Ohtsubo E."/>
        </authorList>
    </citation>
    <scope>NUCLEOTIDE SEQUENCE [GENOMIC DNA]</scope>
</reference>
<reference key="2">
    <citation type="journal article" date="1997" name="Electrophoresis">
        <title>Escherichia coli proteome analysis using the gene-protein database.</title>
        <authorList>
            <person name="VanBogelen R.A."/>
            <person name="Abshire K.Z."/>
            <person name="Moldover B."/>
            <person name="Olson E.R."/>
            <person name="Neidhardt F.C."/>
        </authorList>
    </citation>
    <scope>IDENTIFICATION BY 2D-GEL</scope>
</reference>
<protein>
    <recommendedName>
        <fullName>Transposon Tn3 resolvase</fullName>
    </recommendedName>
</protein>
<dbReference type="EMBL" id="V00613">
    <property type="protein sequence ID" value="CAA23885.1"/>
    <property type="molecule type" value="Genomic_DNA"/>
</dbReference>
<dbReference type="PIR" id="A03541">
    <property type="entry name" value="RPECT"/>
</dbReference>
<dbReference type="RefSeq" id="NP_943294.1">
    <property type="nucleotide sequence ID" value="NC_005248.1"/>
</dbReference>
<dbReference type="RefSeq" id="WP_001217881.1">
    <property type="nucleotide sequence ID" value="NZ_WWEV01000054.1"/>
</dbReference>
<dbReference type="RefSeq" id="YP_001965402.1">
    <property type="nucleotide sequence ID" value="NC_010862.1"/>
</dbReference>
<dbReference type="RefSeq" id="YP_006939985.1">
    <property type="nucleotide sequence ID" value="NC_018994.1"/>
</dbReference>
<dbReference type="RefSeq" id="YP_006952420.1">
    <property type="nucleotide sequence ID" value="NC_019062.1"/>
</dbReference>
<dbReference type="RefSeq" id="YP_006953597.1">
    <property type="nucleotide sequence ID" value="NC_019079.1"/>
</dbReference>
<dbReference type="RefSeq" id="YP_009022937.1">
    <property type="nucleotide sequence ID" value="NC_023907.1"/>
</dbReference>
<dbReference type="RefSeq" id="YP_009060581.1">
    <property type="nucleotide sequence ID" value="NC_024967.1"/>
</dbReference>
<dbReference type="RefSeq" id="YP_190221.1">
    <property type="nucleotide sequence ID" value="NC_006671.1"/>
</dbReference>
<dbReference type="PDB" id="5CY1">
    <property type="method" value="X-ray"/>
    <property type="resolution" value="3.40 A"/>
    <property type="chains" value="A/B=1-185"/>
</dbReference>
<dbReference type="PDB" id="5CY2">
    <property type="method" value="X-ray"/>
    <property type="resolution" value="4.00 A"/>
    <property type="chains" value="A/B/E/F=1-185"/>
</dbReference>
<dbReference type="PDBsum" id="5CY1"/>
<dbReference type="PDBsum" id="5CY2"/>
<dbReference type="SASBDB" id="P0ADI2"/>
<dbReference type="SMR" id="P0ADI2"/>
<dbReference type="GO" id="GO:0003677">
    <property type="term" value="F:DNA binding"/>
    <property type="evidence" value="ECO:0007669"/>
    <property type="project" value="UniProtKB-KW"/>
</dbReference>
<dbReference type="GO" id="GO:0000150">
    <property type="term" value="F:DNA strand exchange activity"/>
    <property type="evidence" value="ECO:0007669"/>
    <property type="project" value="InterPro"/>
</dbReference>
<dbReference type="GO" id="GO:0015074">
    <property type="term" value="P:DNA integration"/>
    <property type="evidence" value="ECO:0007669"/>
    <property type="project" value="UniProtKB-KW"/>
</dbReference>
<dbReference type="CDD" id="cd03768">
    <property type="entry name" value="SR_ResInv"/>
    <property type="match status" value="1"/>
</dbReference>
<dbReference type="FunFam" id="3.40.50.1390:FF:000005">
    <property type="entry name" value="TnpR recombinase"/>
    <property type="match status" value="1"/>
</dbReference>
<dbReference type="Gene3D" id="6.10.250.10">
    <property type="match status" value="1"/>
</dbReference>
<dbReference type="Gene3D" id="1.10.10.60">
    <property type="entry name" value="Homeodomain-like"/>
    <property type="match status" value="1"/>
</dbReference>
<dbReference type="Gene3D" id="3.40.50.1390">
    <property type="entry name" value="Resolvase, N-terminal catalytic domain"/>
    <property type="match status" value="1"/>
</dbReference>
<dbReference type="InterPro" id="IPR009057">
    <property type="entry name" value="Homeodomain-like_sf"/>
</dbReference>
<dbReference type="InterPro" id="IPR006118">
    <property type="entry name" value="Recombinase_CS"/>
</dbReference>
<dbReference type="InterPro" id="IPR006119">
    <property type="entry name" value="Resolv_N"/>
</dbReference>
<dbReference type="InterPro" id="IPR036162">
    <property type="entry name" value="Resolvase-like_N_sf"/>
</dbReference>
<dbReference type="InterPro" id="IPR006120">
    <property type="entry name" value="Resolvase_HTH_dom"/>
</dbReference>
<dbReference type="InterPro" id="IPR050639">
    <property type="entry name" value="SSR_resolvase"/>
</dbReference>
<dbReference type="PANTHER" id="PTHR30461">
    <property type="entry name" value="DNA-INVERTASE FROM LAMBDOID PROPHAGE"/>
    <property type="match status" value="1"/>
</dbReference>
<dbReference type="PANTHER" id="PTHR30461:SF26">
    <property type="entry name" value="RESOLVASE HOMOLOG YNEB"/>
    <property type="match status" value="1"/>
</dbReference>
<dbReference type="Pfam" id="PF02796">
    <property type="entry name" value="HTH_7"/>
    <property type="match status" value="1"/>
</dbReference>
<dbReference type="Pfam" id="PF00239">
    <property type="entry name" value="Resolvase"/>
    <property type="match status" value="1"/>
</dbReference>
<dbReference type="SMART" id="SM00857">
    <property type="entry name" value="Resolvase"/>
    <property type="match status" value="1"/>
</dbReference>
<dbReference type="SUPFAM" id="SSF46689">
    <property type="entry name" value="Homeodomain-like"/>
    <property type="match status" value="1"/>
</dbReference>
<dbReference type="SUPFAM" id="SSF53041">
    <property type="entry name" value="Resolvase-like"/>
    <property type="match status" value="1"/>
</dbReference>
<dbReference type="PROSITE" id="PS00397">
    <property type="entry name" value="RECOMBINASES_1"/>
    <property type="match status" value="1"/>
</dbReference>
<dbReference type="PROSITE" id="PS00398">
    <property type="entry name" value="RECOMBINASES_2"/>
    <property type="match status" value="1"/>
</dbReference>
<dbReference type="PROSITE" id="PS51736">
    <property type="entry name" value="RECOMBINASES_3"/>
    <property type="match status" value="1"/>
</dbReference>
<proteinExistence type="evidence at protein level"/>
<feature type="chain" id="PRO_0000196368" description="Transposon Tn3 resolvase">
    <location>
        <begin position="1"/>
        <end position="185"/>
    </location>
</feature>
<feature type="domain" description="Resolvase/invertase-type recombinase catalytic" evidence="2">
    <location>
        <begin position="2"/>
        <end position="137"/>
    </location>
</feature>
<feature type="DNA-binding region" description="H-T-H motif" evidence="1">
    <location>
        <begin position="161"/>
        <end position="180"/>
    </location>
</feature>
<feature type="active site" description="O-(5'-phospho-DNA)-serine intermediate" evidence="2">
    <location>
        <position position="10"/>
    </location>
</feature>
<feature type="strand" evidence="4">
    <location>
        <begin position="3"/>
        <end position="8"/>
    </location>
</feature>
<feature type="helix" evidence="4">
    <location>
        <begin position="14"/>
        <end position="25"/>
    </location>
</feature>
<feature type="helix" evidence="4">
    <location>
        <begin position="30"/>
        <end position="32"/>
    </location>
</feature>
<feature type="strand" evidence="4">
    <location>
        <begin position="33"/>
        <end position="36"/>
    </location>
</feature>
<feature type="helix" evidence="4">
    <location>
        <begin position="46"/>
        <end position="54"/>
    </location>
</feature>
<feature type="strand" evidence="4">
    <location>
        <begin position="60"/>
        <end position="64"/>
    </location>
</feature>
<feature type="helix" evidence="4">
    <location>
        <begin position="66"/>
        <end position="68"/>
    </location>
</feature>
<feature type="strand" evidence="4">
    <location>
        <begin position="70"/>
        <end position="72"/>
    </location>
</feature>
<feature type="helix" evidence="4">
    <location>
        <begin position="73"/>
        <end position="85"/>
    </location>
</feature>
<feature type="strand" evidence="4">
    <location>
        <begin position="89"/>
        <end position="92"/>
    </location>
</feature>
<feature type="turn" evidence="4">
    <location>
        <begin position="93"/>
        <end position="96"/>
    </location>
</feature>
<feature type="strand" evidence="4">
    <location>
        <begin position="97"/>
        <end position="100"/>
    </location>
</feature>
<feature type="turn" evidence="4">
    <location>
        <begin position="101"/>
        <end position="103"/>
    </location>
</feature>
<feature type="helix" evidence="4">
    <location>
        <begin position="104"/>
        <end position="128"/>
    </location>
</feature>
<feature type="helix" evidence="4">
    <location>
        <begin position="148"/>
        <end position="157"/>
    </location>
</feature>
<feature type="helix" evidence="4">
    <location>
        <begin position="161"/>
        <end position="168"/>
    </location>
</feature>
<feature type="helix" evidence="4">
    <location>
        <begin position="172"/>
        <end position="185"/>
    </location>
</feature>
<organism>
    <name type="scientific">Escherichia coli</name>
    <dbReference type="NCBI Taxonomy" id="562"/>
    <lineage>
        <taxon>Bacteria</taxon>
        <taxon>Pseudomonadati</taxon>
        <taxon>Pseudomonadota</taxon>
        <taxon>Gammaproteobacteria</taxon>
        <taxon>Enterobacterales</taxon>
        <taxon>Enterobacteriaceae</taxon>
        <taxon>Escherichia</taxon>
    </lineage>
</organism>
<comment type="function">
    <text>Resolvase catalyzes the resolution (a site-specific recombination) of the cointegrated replicon to yield the final transposition products.</text>
</comment>
<comment type="similarity">
    <text evidence="3">Belongs to the site-specific recombinase resolvase family.</text>
</comment>